<keyword id="KW-0067">ATP-binding</keyword>
<keyword id="KW-1003">Cell membrane</keyword>
<keyword id="KW-0418">Kinase</keyword>
<keyword id="KW-0472">Membrane</keyword>
<keyword id="KW-0547">Nucleotide-binding</keyword>
<keyword id="KW-0597">Phosphoprotein</keyword>
<keyword id="KW-0808">Transferase</keyword>
<keyword id="KW-0812">Transmembrane</keyword>
<keyword id="KW-1133">Transmembrane helix</keyword>
<keyword id="KW-0902">Two-component regulatory system</keyword>
<name>DLTS_STRA3</name>
<reference key="1">
    <citation type="journal article" date="2001" name="J. Bacteriol.">
        <title>Regulation of D-alanyl-lipoteichoic acid biosynthesis in Streptococcus agalactiae involves a novel two-component regulatory system.</title>
        <authorList>
            <person name="Poyart C."/>
            <person name="Lamy M.C."/>
            <person name="Boumaila C."/>
            <person name="Fiedler F."/>
            <person name="Trieu-Cuot P."/>
        </authorList>
    </citation>
    <scope>NUCLEOTIDE SEQUENCE [GENOMIC DNA]</scope>
    <source>
        <strain>NEM316</strain>
    </source>
</reference>
<reference key="2">
    <citation type="journal article" date="2002" name="Mol. Microbiol.">
        <title>Genome sequence of Streptococcus agalactiae, a pathogen causing invasive neonatal disease.</title>
        <authorList>
            <person name="Glaser P."/>
            <person name="Rusniok C."/>
            <person name="Buchrieser C."/>
            <person name="Chevalier F."/>
            <person name="Frangeul L."/>
            <person name="Msadek T."/>
            <person name="Zouine M."/>
            <person name="Couve E."/>
            <person name="Lalioui L."/>
            <person name="Poyart C."/>
            <person name="Trieu-Cuot P."/>
            <person name="Kunst F."/>
        </authorList>
    </citation>
    <scope>NUCLEOTIDE SEQUENCE [LARGE SCALE GENOMIC DNA]</scope>
    <source>
        <strain>NEM316</strain>
    </source>
</reference>
<accession>Q8E3C7</accession>
<accession>Q8VM68</accession>
<proteinExistence type="inferred from homology"/>
<evidence type="ECO:0000255" key="1"/>
<evidence type="ECO:0000255" key="2">
    <source>
        <dbReference type="PROSITE-ProRule" id="PRU00107"/>
    </source>
</evidence>
<evidence type="ECO:0000305" key="3"/>
<feature type="chain" id="PRO_0000074730" description="Sensor protein DltS">
    <location>
        <begin position="1"/>
        <end position="395"/>
    </location>
</feature>
<feature type="transmembrane region" description="Helical" evidence="1">
    <location>
        <begin position="9"/>
        <end position="29"/>
    </location>
</feature>
<feature type="transmembrane region" description="Helical" evidence="1">
    <location>
        <begin position="136"/>
        <end position="156"/>
    </location>
</feature>
<feature type="domain" description="Histidine kinase" evidence="2">
    <location>
        <begin position="177"/>
        <end position="387"/>
    </location>
</feature>
<feature type="modified residue" description="Phosphohistidine; by autocatalysis" evidence="2">
    <location>
        <position position="180"/>
    </location>
</feature>
<feature type="sequence conflict" description="In Ref. 1; CAC83084." evidence="3" ref="1">
    <original>E</original>
    <variation>A</variation>
    <location>
        <position position="302"/>
    </location>
</feature>
<gene>
    <name type="primary">dltS</name>
    <name type="ordered locus">gbs1834</name>
</gene>
<organism>
    <name type="scientific">Streptococcus agalactiae serotype III (strain NEM316)</name>
    <dbReference type="NCBI Taxonomy" id="211110"/>
    <lineage>
        <taxon>Bacteria</taxon>
        <taxon>Bacillati</taxon>
        <taxon>Bacillota</taxon>
        <taxon>Bacilli</taxon>
        <taxon>Lactobacillales</taxon>
        <taxon>Streptococcaceae</taxon>
        <taxon>Streptococcus</taxon>
    </lineage>
</organism>
<protein>
    <recommendedName>
        <fullName>Sensor protein DltS</fullName>
        <ecNumber>2.7.13.3</ecNumber>
    </recommendedName>
</protein>
<sequence length="395" mass="45822">MFSDLRKKFVFLTMSILIVVVLFLFAVSNRYNQYWDEYDAYRIVKLVAKNDYLGIPGDEPIALVTIDNQKMVKIQSNNTDLTNDVIEKSSLKLLEQGKKSRKWKSFIYSIKEYKDKTYTIAIMDLASYEVPYARRFLILVFTIFGFCLLAAVSLYLSRFIVGPVETEMTREKQFVSDASHELKTPIAAIRANVQVLEQQIPGNRYLDHVVSETKRMEFLIEDLLNLSRLDEKRSKVNFKKLNLSVLCQEVLLTYESLAYEEEKCLNDTIEDDVWIVGEESQIKQILIILLDNAIRHSLSKSEIQFSLKQARRKAILTISNPSAIYSKEVMDNLFERFYQAKDDHADSLSFGLGLSIAKAIVERHKGRIRAYQEKDQLRLEVQLPIDGFWTNTMIN</sequence>
<dbReference type="EC" id="2.7.13.3"/>
<dbReference type="EMBL" id="AJ291784">
    <property type="protein sequence ID" value="CAC83084.1"/>
    <property type="molecule type" value="Genomic_DNA"/>
</dbReference>
<dbReference type="EMBL" id="AL766853">
    <property type="protein sequence ID" value="CAD47493.1"/>
    <property type="molecule type" value="Genomic_DNA"/>
</dbReference>
<dbReference type="RefSeq" id="WP_000490537.1">
    <property type="nucleotide sequence ID" value="NC_004368.1"/>
</dbReference>
<dbReference type="SMR" id="Q8E3C7"/>
<dbReference type="KEGG" id="san:gbs1834"/>
<dbReference type="eggNOG" id="COG5002">
    <property type="taxonomic scope" value="Bacteria"/>
</dbReference>
<dbReference type="HOGENOM" id="CLU_000445_89_6_9"/>
<dbReference type="Proteomes" id="UP000000823">
    <property type="component" value="Chromosome"/>
</dbReference>
<dbReference type="GO" id="GO:0005886">
    <property type="term" value="C:plasma membrane"/>
    <property type="evidence" value="ECO:0007669"/>
    <property type="project" value="UniProtKB-SubCell"/>
</dbReference>
<dbReference type="GO" id="GO:0005524">
    <property type="term" value="F:ATP binding"/>
    <property type="evidence" value="ECO:0007669"/>
    <property type="project" value="UniProtKB-KW"/>
</dbReference>
<dbReference type="GO" id="GO:0004721">
    <property type="term" value="F:phosphoprotein phosphatase activity"/>
    <property type="evidence" value="ECO:0007669"/>
    <property type="project" value="TreeGrafter"/>
</dbReference>
<dbReference type="GO" id="GO:0000155">
    <property type="term" value="F:phosphorelay sensor kinase activity"/>
    <property type="evidence" value="ECO:0007669"/>
    <property type="project" value="InterPro"/>
</dbReference>
<dbReference type="GO" id="GO:0016036">
    <property type="term" value="P:cellular response to phosphate starvation"/>
    <property type="evidence" value="ECO:0007669"/>
    <property type="project" value="TreeGrafter"/>
</dbReference>
<dbReference type="CDD" id="cd00075">
    <property type="entry name" value="HATPase"/>
    <property type="match status" value="1"/>
</dbReference>
<dbReference type="CDD" id="cd00082">
    <property type="entry name" value="HisKA"/>
    <property type="match status" value="1"/>
</dbReference>
<dbReference type="FunFam" id="1.10.287.130:FF:000001">
    <property type="entry name" value="Two-component sensor histidine kinase"/>
    <property type="match status" value="1"/>
</dbReference>
<dbReference type="Gene3D" id="1.10.287.130">
    <property type="match status" value="1"/>
</dbReference>
<dbReference type="Gene3D" id="3.30.565.10">
    <property type="entry name" value="Histidine kinase-like ATPase, C-terminal domain"/>
    <property type="match status" value="1"/>
</dbReference>
<dbReference type="InterPro" id="IPR050351">
    <property type="entry name" value="2-comp_sensor_kinase"/>
</dbReference>
<dbReference type="InterPro" id="IPR036890">
    <property type="entry name" value="HATPase_C_sf"/>
</dbReference>
<dbReference type="InterPro" id="IPR005467">
    <property type="entry name" value="His_kinase_dom"/>
</dbReference>
<dbReference type="InterPro" id="IPR003661">
    <property type="entry name" value="HisK_dim/P_dom"/>
</dbReference>
<dbReference type="InterPro" id="IPR036097">
    <property type="entry name" value="HisK_dim/P_sf"/>
</dbReference>
<dbReference type="PANTHER" id="PTHR45453">
    <property type="entry name" value="PHOSPHATE REGULON SENSOR PROTEIN PHOR"/>
    <property type="match status" value="1"/>
</dbReference>
<dbReference type="PANTHER" id="PTHR45453:SF1">
    <property type="entry name" value="PHOSPHATE REGULON SENSOR PROTEIN PHOR"/>
    <property type="match status" value="1"/>
</dbReference>
<dbReference type="Pfam" id="PF02518">
    <property type="entry name" value="HATPase_c"/>
    <property type="match status" value="1"/>
</dbReference>
<dbReference type="Pfam" id="PF00512">
    <property type="entry name" value="HisKA"/>
    <property type="match status" value="1"/>
</dbReference>
<dbReference type="SMART" id="SM00387">
    <property type="entry name" value="HATPase_c"/>
    <property type="match status" value="1"/>
</dbReference>
<dbReference type="SMART" id="SM00388">
    <property type="entry name" value="HisKA"/>
    <property type="match status" value="1"/>
</dbReference>
<dbReference type="SUPFAM" id="SSF55874">
    <property type="entry name" value="ATPase domain of HSP90 chaperone/DNA topoisomerase II/histidine kinase"/>
    <property type="match status" value="1"/>
</dbReference>
<dbReference type="SUPFAM" id="SSF47384">
    <property type="entry name" value="Homodimeric domain of signal transducing histidine kinase"/>
    <property type="match status" value="1"/>
</dbReference>
<dbReference type="PROSITE" id="PS50109">
    <property type="entry name" value="HIS_KIN"/>
    <property type="match status" value="1"/>
</dbReference>
<comment type="function">
    <text>Member of the two-component regulatory system DltS/DltR. Regulates the expression of the dlt operon. Probably phosphorylates DltR.</text>
</comment>
<comment type="catalytic activity">
    <reaction>
        <text>ATP + protein L-histidine = ADP + protein N-phospho-L-histidine.</text>
        <dbReference type="EC" id="2.7.13.3"/>
    </reaction>
</comment>
<comment type="subcellular location">
    <subcellularLocation>
        <location evidence="3">Cell membrane</location>
        <topology evidence="3">Multi-pass membrane protein</topology>
    </subcellularLocation>
</comment>